<comment type="function">
    <text evidence="1">Catalyzes the ATP-dependent 2-thiolation of cytidine in position 32 of tRNA, to form 2-thiocytidine (s(2)C32). The sulfur atoms are provided by the cysteine/cysteine desulfurase (IscS) system.</text>
</comment>
<comment type="catalytic activity">
    <reaction evidence="1">
        <text>cytidine(32) in tRNA + S-sulfanyl-L-cysteinyl-[cysteine desulfurase] + AH2 + ATP = 2-thiocytidine(32) in tRNA + L-cysteinyl-[cysteine desulfurase] + A + AMP + diphosphate + H(+)</text>
        <dbReference type="Rhea" id="RHEA:57048"/>
        <dbReference type="Rhea" id="RHEA-COMP:10288"/>
        <dbReference type="Rhea" id="RHEA-COMP:12157"/>
        <dbReference type="Rhea" id="RHEA-COMP:12158"/>
        <dbReference type="Rhea" id="RHEA-COMP:14821"/>
        <dbReference type="ChEBI" id="CHEBI:13193"/>
        <dbReference type="ChEBI" id="CHEBI:15378"/>
        <dbReference type="ChEBI" id="CHEBI:17499"/>
        <dbReference type="ChEBI" id="CHEBI:29950"/>
        <dbReference type="ChEBI" id="CHEBI:30616"/>
        <dbReference type="ChEBI" id="CHEBI:33019"/>
        <dbReference type="ChEBI" id="CHEBI:61963"/>
        <dbReference type="ChEBI" id="CHEBI:82748"/>
        <dbReference type="ChEBI" id="CHEBI:141453"/>
        <dbReference type="ChEBI" id="CHEBI:456215"/>
    </reaction>
    <physiologicalReaction direction="left-to-right" evidence="1">
        <dbReference type="Rhea" id="RHEA:57049"/>
    </physiologicalReaction>
</comment>
<comment type="cofactor">
    <cofactor evidence="1">
        <name>Mg(2+)</name>
        <dbReference type="ChEBI" id="CHEBI:18420"/>
    </cofactor>
</comment>
<comment type="cofactor">
    <cofactor evidence="1">
        <name>[4Fe-4S] cluster</name>
        <dbReference type="ChEBI" id="CHEBI:49883"/>
    </cofactor>
    <text evidence="1">Binds 1 [4Fe-4S] cluster per subunit. The cluster is chelated by three Cys residues, the fourth Fe has a free coordination site that may bind a sulfur atom transferred from the persulfide of IscS.</text>
</comment>
<comment type="pathway">
    <text evidence="1">tRNA modification.</text>
</comment>
<comment type="subunit">
    <text evidence="1">Homodimer.</text>
</comment>
<comment type="subcellular location">
    <subcellularLocation>
        <location evidence="1">Cytoplasm</location>
    </subcellularLocation>
</comment>
<comment type="miscellaneous">
    <text evidence="1">The thiolation reaction likely consists of two steps: a first activation step by ATP to form an adenylated intermediate of the target base of tRNA, and a second nucleophilic substitution step of the sulfur (S) atom supplied by the hydrosulfide attached to the Fe-S cluster.</text>
</comment>
<comment type="similarity">
    <text evidence="1">Belongs to the TtcA family.</text>
</comment>
<feature type="chain" id="PRO_1000188626" description="tRNA-cytidine(32) 2-sulfurtransferase">
    <location>
        <begin position="1"/>
        <end position="291"/>
    </location>
</feature>
<feature type="region of interest" description="Disordered" evidence="2">
    <location>
        <begin position="259"/>
        <end position="291"/>
    </location>
</feature>
<feature type="short sequence motif" description="PP-loop motif" evidence="1">
    <location>
        <begin position="36"/>
        <end position="41"/>
    </location>
</feature>
<feature type="compositionally biased region" description="Acidic residues" evidence="2">
    <location>
        <begin position="262"/>
        <end position="273"/>
    </location>
</feature>
<feature type="binding site" evidence="1">
    <location>
        <position position="111"/>
    </location>
    <ligand>
        <name>[4Fe-4S] cluster</name>
        <dbReference type="ChEBI" id="CHEBI:49883"/>
    </ligand>
</feature>
<feature type="binding site" evidence="1">
    <location>
        <position position="114"/>
    </location>
    <ligand>
        <name>[4Fe-4S] cluster</name>
        <dbReference type="ChEBI" id="CHEBI:49883"/>
    </ligand>
</feature>
<feature type="binding site" evidence="1">
    <location>
        <position position="202"/>
    </location>
    <ligand>
        <name>[4Fe-4S] cluster</name>
        <dbReference type="ChEBI" id="CHEBI:49883"/>
    </ligand>
</feature>
<keyword id="KW-0004">4Fe-4S</keyword>
<keyword id="KW-0067">ATP-binding</keyword>
<keyword id="KW-0963">Cytoplasm</keyword>
<keyword id="KW-0408">Iron</keyword>
<keyword id="KW-0411">Iron-sulfur</keyword>
<keyword id="KW-0460">Magnesium</keyword>
<keyword id="KW-0479">Metal-binding</keyword>
<keyword id="KW-0547">Nucleotide-binding</keyword>
<keyword id="KW-0694">RNA-binding</keyword>
<keyword id="KW-0808">Transferase</keyword>
<keyword id="KW-0819">tRNA processing</keyword>
<keyword id="KW-0820">tRNA-binding</keyword>
<proteinExistence type="inferred from homology"/>
<sequence>MQQIHRLERKLLRATAEAIRDFDLVSQGDRIMVAVSGGKDSYTLLHLLMRLRERAPIDFDLVAVNLDQGQPGFPAQVVEDHLRSVGVPYRMLQRDTYSVVRRLVPEGKTTCPVCSRLRRGVLYNAAVEMGCTKIALGHHRDDLVETLLLSALYSGALKSMPPKLRSRDGRNVVVRPLCYAAEEDVAAFAEAMRFPIVPCDLCGSQPNLRRKRVKRLLAELSAEHPAVKGNLLHALAHVVPSHLLDRDLHRQLADATGRDPWLDAEDEEAEDCGEPSAGDGVVSLGGARGGR</sequence>
<reference key="1">
    <citation type="submission" date="2008-08" db="EMBL/GenBank/DDBJ databases">
        <title>Complete sequence of Anaeromyxobacter sp. K.</title>
        <authorList>
            <consortium name="US DOE Joint Genome Institute"/>
            <person name="Lucas S."/>
            <person name="Copeland A."/>
            <person name="Lapidus A."/>
            <person name="Glavina del Rio T."/>
            <person name="Dalin E."/>
            <person name="Tice H."/>
            <person name="Bruce D."/>
            <person name="Goodwin L."/>
            <person name="Pitluck S."/>
            <person name="Saunders E."/>
            <person name="Brettin T."/>
            <person name="Detter J.C."/>
            <person name="Han C."/>
            <person name="Larimer F."/>
            <person name="Land M."/>
            <person name="Hauser L."/>
            <person name="Kyrpides N."/>
            <person name="Ovchinnikiva G."/>
            <person name="Beliaev A."/>
        </authorList>
    </citation>
    <scope>NUCLEOTIDE SEQUENCE [LARGE SCALE GENOMIC DNA]</scope>
    <source>
        <strain>K</strain>
    </source>
</reference>
<gene>
    <name evidence="1" type="primary">ttcA</name>
    <name type="ordered locus">AnaeK_0952</name>
</gene>
<evidence type="ECO:0000255" key="1">
    <source>
        <dbReference type="HAMAP-Rule" id="MF_01850"/>
    </source>
</evidence>
<evidence type="ECO:0000256" key="2">
    <source>
        <dbReference type="SAM" id="MobiDB-lite"/>
    </source>
</evidence>
<protein>
    <recommendedName>
        <fullName evidence="1">tRNA-cytidine(32) 2-sulfurtransferase</fullName>
        <ecNumber evidence="1">2.8.1.-</ecNumber>
    </recommendedName>
    <alternativeName>
        <fullName evidence="1">Two-thiocytidine biosynthesis protein A</fullName>
    </alternativeName>
    <alternativeName>
        <fullName evidence="1">tRNA 2-thiocytidine biosynthesis protein TtcA</fullName>
    </alternativeName>
</protein>
<name>TTCA_ANASK</name>
<organism>
    <name type="scientific">Anaeromyxobacter sp. (strain K)</name>
    <dbReference type="NCBI Taxonomy" id="447217"/>
    <lineage>
        <taxon>Bacteria</taxon>
        <taxon>Pseudomonadati</taxon>
        <taxon>Myxococcota</taxon>
        <taxon>Myxococcia</taxon>
        <taxon>Myxococcales</taxon>
        <taxon>Cystobacterineae</taxon>
        <taxon>Anaeromyxobacteraceae</taxon>
        <taxon>Anaeromyxobacter</taxon>
    </lineage>
</organism>
<accession>B4UF77</accession>
<dbReference type="EC" id="2.8.1.-" evidence="1"/>
<dbReference type="EMBL" id="CP001131">
    <property type="protein sequence ID" value="ACG72187.1"/>
    <property type="molecule type" value="Genomic_DNA"/>
</dbReference>
<dbReference type="RefSeq" id="WP_012525014.1">
    <property type="nucleotide sequence ID" value="NC_011145.1"/>
</dbReference>
<dbReference type="SMR" id="B4UF77"/>
<dbReference type="KEGG" id="ank:AnaeK_0952"/>
<dbReference type="HOGENOM" id="CLU_026481_0_0_7"/>
<dbReference type="OrthoDB" id="9801054at2"/>
<dbReference type="Proteomes" id="UP000001871">
    <property type="component" value="Chromosome"/>
</dbReference>
<dbReference type="GO" id="GO:0005737">
    <property type="term" value="C:cytoplasm"/>
    <property type="evidence" value="ECO:0007669"/>
    <property type="project" value="UniProtKB-SubCell"/>
</dbReference>
<dbReference type="GO" id="GO:0051539">
    <property type="term" value="F:4 iron, 4 sulfur cluster binding"/>
    <property type="evidence" value="ECO:0007669"/>
    <property type="project" value="UniProtKB-KW"/>
</dbReference>
<dbReference type="GO" id="GO:0005524">
    <property type="term" value="F:ATP binding"/>
    <property type="evidence" value="ECO:0007669"/>
    <property type="project" value="UniProtKB-KW"/>
</dbReference>
<dbReference type="GO" id="GO:0046872">
    <property type="term" value="F:metal ion binding"/>
    <property type="evidence" value="ECO:0007669"/>
    <property type="project" value="UniProtKB-KW"/>
</dbReference>
<dbReference type="GO" id="GO:0016740">
    <property type="term" value="F:transferase activity"/>
    <property type="evidence" value="ECO:0007669"/>
    <property type="project" value="UniProtKB-KW"/>
</dbReference>
<dbReference type="GO" id="GO:0000049">
    <property type="term" value="F:tRNA binding"/>
    <property type="evidence" value="ECO:0007669"/>
    <property type="project" value="UniProtKB-KW"/>
</dbReference>
<dbReference type="GO" id="GO:0006400">
    <property type="term" value="P:tRNA modification"/>
    <property type="evidence" value="ECO:0007669"/>
    <property type="project" value="UniProtKB-ARBA"/>
</dbReference>
<dbReference type="CDD" id="cd24138">
    <property type="entry name" value="TtcA-like"/>
    <property type="match status" value="1"/>
</dbReference>
<dbReference type="Gene3D" id="3.40.50.620">
    <property type="entry name" value="HUPs"/>
    <property type="match status" value="1"/>
</dbReference>
<dbReference type="HAMAP" id="MF_01850">
    <property type="entry name" value="TtcA"/>
    <property type="match status" value="1"/>
</dbReference>
<dbReference type="InterPro" id="IPR014729">
    <property type="entry name" value="Rossmann-like_a/b/a_fold"/>
</dbReference>
<dbReference type="InterPro" id="IPR011063">
    <property type="entry name" value="TilS/TtcA_N"/>
</dbReference>
<dbReference type="InterPro" id="IPR012089">
    <property type="entry name" value="tRNA_Cyd_32_2_STrfase"/>
</dbReference>
<dbReference type="InterPro" id="IPR035107">
    <property type="entry name" value="tRNA_thiolation_TtcA_Ctu1"/>
</dbReference>
<dbReference type="NCBIfam" id="NF007972">
    <property type="entry name" value="PRK10696.1"/>
    <property type="match status" value="1"/>
</dbReference>
<dbReference type="PANTHER" id="PTHR43686:SF1">
    <property type="entry name" value="AMINOTRAN_5 DOMAIN-CONTAINING PROTEIN"/>
    <property type="match status" value="1"/>
</dbReference>
<dbReference type="PANTHER" id="PTHR43686">
    <property type="entry name" value="SULFURTRANSFERASE-RELATED"/>
    <property type="match status" value="1"/>
</dbReference>
<dbReference type="Pfam" id="PF01171">
    <property type="entry name" value="ATP_bind_3"/>
    <property type="match status" value="1"/>
</dbReference>
<dbReference type="PIRSF" id="PIRSF004976">
    <property type="entry name" value="ATPase_YdaO"/>
    <property type="match status" value="1"/>
</dbReference>
<dbReference type="SUPFAM" id="SSF52402">
    <property type="entry name" value="Adenine nucleotide alpha hydrolases-like"/>
    <property type="match status" value="1"/>
</dbReference>